<proteinExistence type="evidence at transcript level"/>
<name>CLD4_CHLAE</name>
<dbReference type="EMBL" id="D88492">
    <property type="protein sequence ID" value="BAA22781.1"/>
    <property type="molecule type" value="mRNA"/>
</dbReference>
<dbReference type="SMR" id="O19005"/>
<dbReference type="GO" id="GO:0005923">
    <property type="term" value="C:bicellular tight junction"/>
    <property type="evidence" value="ECO:0000250"/>
    <property type="project" value="UniProtKB"/>
</dbReference>
<dbReference type="GO" id="GO:0034707">
    <property type="term" value="C:chloride channel complex"/>
    <property type="evidence" value="ECO:0007669"/>
    <property type="project" value="UniProtKB-KW"/>
</dbReference>
<dbReference type="GO" id="GO:0005886">
    <property type="term" value="C:plasma membrane"/>
    <property type="evidence" value="ECO:0007669"/>
    <property type="project" value="UniProtKB-SubCell"/>
</dbReference>
<dbReference type="GO" id="GO:0005254">
    <property type="term" value="F:chloride channel activity"/>
    <property type="evidence" value="ECO:0007669"/>
    <property type="project" value="UniProtKB-KW"/>
</dbReference>
<dbReference type="GO" id="GO:0042802">
    <property type="term" value="F:identical protein binding"/>
    <property type="evidence" value="ECO:0000250"/>
    <property type="project" value="UniProtKB"/>
</dbReference>
<dbReference type="GO" id="GO:0005198">
    <property type="term" value="F:structural molecule activity"/>
    <property type="evidence" value="ECO:0007669"/>
    <property type="project" value="InterPro"/>
</dbReference>
<dbReference type="GO" id="GO:0016338">
    <property type="term" value="P:calcium-independent cell-cell adhesion via plasma membrane cell-adhesion molecules"/>
    <property type="evidence" value="ECO:0000250"/>
    <property type="project" value="UniProtKB"/>
</dbReference>
<dbReference type="GO" id="GO:0160184">
    <property type="term" value="P:paracellular transport"/>
    <property type="evidence" value="ECO:0000250"/>
    <property type="project" value="UniProtKB"/>
</dbReference>
<dbReference type="GO" id="GO:0070293">
    <property type="term" value="P:renal absorption"/>
    <property type="evidence" value="ECO:0000250"/>
    <property type="project" value="UniProtKB"/>
</dbReference>
<dbReference type="FunFam" id="1.20.140.150:FF:000001">
    <property type="entry name" value="Claudin"/>
    <property type="match status" value="1"/>
</dbReference>
<dbReference type="Gene3D" id="1.20.140.150">
    <property type="match status" value="1"/>
</dbReference>
<dbReference type="InterPro" id="IPR006187">
    <property type="entry name" value="Claudin"/>
</dbReference>
<dbReference type="InterPro" id="IPR003550">
    <property type="entry name" value="Claudin4"/>
</dbReference>
<dbReference type="InterPro" id="IPR017974">
    <property type="entry name" value="Claudin_CS"/>
</dbReference>
<dbReference type="InterPro" id="IPR004031">
    <property type="entry name" value="PMP22/EMP/MP20/Claudin"/>
</dbReference>
<dbReference type="PANTHER" id="PTHR12002">
    <property type="entry name" value="CLAUDIN"/>
    <property type="match status" value="1"/>
</dbReference>
<dbReference type="Pfam" id="PF00822">
    <property type="entry name" value="PMP22_Claudin"/>
    <property type="match status" value="1"/>
</dbReference>
<dbReference type="PRINTS" id="PR01077">
    <property type="entry name" value="CLAUDIN"/>
</dbReference>
<dbReference type="PRINTS" id="PR01379">
    <property type="entry name" value="CLAUDIN4"/>
</dbReference>
<dbReference type="PROSITE" id="PS01346">
    <property type="entry name" value="CLAUDIN"/>
    <property type="match status" value="1"/>
</dbReference>
<accession>O19005</accession>
<feature type="chain" id="PRO_0000144742" description="Claudin-4">
    <location>
        <begin position="1"/>
        <end position="209"/>
    </location>
</feature>
<feature type="topological domain" description="Cytoplasmic" evidence="3">
    <location>
        <begin position="1"/>
        <end position="9"/>
    </location>
</feature>
<feature type="transmembrane region" description="Helical" evidence="3">
    <location>
        <begin position="10"/>
        <end position="30"/>
    </location>
</feature>
<feature type="topological domain" description="Extracellular" evidence="3">
    <location>
        <begin position="31"/>
        <end position="81"/>
    </location>
</feature>
<feature type="transmembrane region" description="Helical" evidence="3">
    <location>
        <begin position="82"/>
        <end position="102"/>
    </location>
</feature>
<feature type="topological domain" description="Cytoplasmic" evidence="3">
    <location>
        <begin position="103"/>
        <end position="117"/>
    </location>
</feature>
<feature type="transmembrane region" description="Helical" evidence="3">
    <location>
        <begin position="118"/>
        <end position="138"/>
    </location>
</feature>
<feature type="topological domain" description="Extracellular" evidence="3">
    <location>
        <begin position="139"/>
        <end position="160"/>
    </location>
</feature>
<feature type="transmembrane region" description="Helical" evidence="3">
    <location>
        <begin position="161"/>
        <end position="181"/>
    </location>
</feature>
<feature type="topological domain" description="Cytoplasmic" evidence="3">
    <location>
        <begin position="182"/>
        <end position="209"/>
    </location>
</feature>
<feature type="region of interest" description="Interaction with EPHA2" evidence="1">
    <location>
        <begin position="1"/>
        <end position="103"/>
    </location>
</feature>
<feature type="region of interest" description="Interactions with TJP1, TJP2 and TJP3" evidence="2">
    <location>
        <begin position="208"/>
        <end position="209"/>
    </location>
</feature>
<feature type="modified residue" description="Phosphotyrosine; by EPHA2" evidence="1">
    <location>
        <position position="208"/>
    </location>
</feature>
<feature type="disulfide bond" evidence="1">
    <location>
        <begin position="54"/>
        <end position="64"/>
    </location>
</feature>
<organism>
    <name type="scientific">Chlorocebus aethiops</name>
    <name type="common">Green monkey</name>
    <name type="synonym">Cercopithecus aethiops</name>
    <dbReference type="NCBI Taxonomy" id="9534"/>
    <lineage>
        <taxon>Eukaryota</taxon>
        <taxon>Metazoa</taxon>
        <taxon>Chordata</taxon>
        <taxon>Craniata</taxon>
        <taxon>Vertebrata</taxon>
        <taxon>Euteleostomi</taxon>
        <taxon>Mammalia</taxon>
        <taxon>Eutheria</taxon>
        <taxon>Euarchontoglires</taxon>
        <taxon>Primates</taxon>
        <taxon>Haplorrhini</taxon>
        <taxon>Catarrhini</taxon>
        <taxon>Cercopithecidae</taxon>
        <taxon>Cercopithecinae</taxon>
        <taxon>Chlorocebus</taxon>
    </lineage>
</organism>
<keyword id="KW-0965">Cell junction</keyword>
<keyword id="KW-1003">Cell membrane</keyword>
<keyword id="KW-0868">Chloride</keyword>
<keyword id="KW-0869">Chloride channel</keyword>
<keyword id="KW-1015">Disulfide bond</keyword>
<keyword id="KW-0407">Ion channel</keyword>
<keyword id="KW-0406">Ion transport</keyword>
<keyword id="KW-0472">Membrane</keyword>
<keyword id="KW-0597">Phosphoprotein</keyword>
<keyword id="KW-0796">Tight junction</keyword>
<keyword id="KW-0812">Transmembrane</keyword>
<keyword id="KW-1133">Transmembrane helix</keyword>
<keyword id="KW-0813">Transport</keyword>
<comment type="function">
    <text evidence="2">Channel-forming tight junction protein that mediates paracellular chloride transport in the kidney. Plays a critical role in the paracellular reabsorption of filtered chloride in the kidney collecting ducts. Claudins play a major role in tight junction-specific obliteration of the intercellular space, through calcium-independent cell-adhesion activity.</text>
</comment>
<comment type="subunit">
    <text evidence="1 2">Interacts with EPHA2; phosphorylates CLDN4 and may regulate tight junctions (By similarity). Directly interacts with TJP1/ZO-1, TJP2/ZO-2 and TJP3/ZO-3 (By similarity). Interacts with CLDN1 (By similarity). Interacts with CLDN8 (By similarity).</text>
</comment>
<comment type="subcellular location">
    <subcellularLocation>
        <location evidence="2">Cell junction</location>
        <location evidence="2">Tight junction</location>
    </subcellularLocation>
    <subcellularLocation>
        <location evidence="2">Cell membrane</location>
        <topology evidence="3">Multi-pass membrane protein</topology>
    </subcellularLocation>
    <text evidence="2">CLDN4 is required for tight junction localization in the kidney.</text>
</comment>
<comment type="PTM">
    <text evidence="1">Phosphorylated. Phosphorylation by EPHA2 is stimulated by EFNA1 and alters interaction with TJP1 (By similarity).</text>
</comment>
<comment type="similarity">
    <text evidence="4">Belongs to the claudin family.</text>
</comment>
<reference key="1">
    <citation type="journal article" date="1997" name="J. Cell Biol.">
        <title>Molecular cloning and functional characterization of the receptor for Clostridium perfringens enterotoxin.</title>
        <authorList>
            <person name="Katahira J."/>
            <person name="Inoue N."/>
            <person name="Horiguchi Y."/>
            <person name="Matsuda M."/>
            <person name="Sugimoto N."/>
        </authorList>
    </citation>
    <scope>NUCLEOTIDE SEQUENCE [MRNA]</scope>
</reference>
<sequence length="209" mass="22029">MASMGLQVTGIALAVLGWLAVMLCCALPMWRVTAFIGSNIVTSQTIWEGLWMNCVVQSTGQMQCKVYDSLLALPQDLQAARALVIISIIVAALGVLLSVVGGKCTNCLEDESAKAKTMIVAGVVFLLAGLLVIVPVSWTAHNIIQDFYNPLVASGQKREMGASLYVGWAASGLLLLGGGLLCCNCPPRTDKPYSAKYSAARSAAASNYV</sequence>
<protein>
    <recommendedName>
        <fullName>Claudin-4</fullName>
    </recommendedName>
    <alternativeName>
        <fullName>Clostridium perfringens enterotoxin receptor</fullName>
        <shortName>CPE-R</shortName>
        <shortName>CPE-receptor</shortName>
    </alternativeName>
</protein>
<evidence type="ECO:0000250" key="1">
    <source>
        <dbReference type="UniProtKB" id="O14493"/>
    </source>
</evidence>
<evidence type="ECO:0000250" key="2">
    <source>
        <dbReference type="UniProtKB" id="O35054"/>
    </source>
</evidence>
<evidence type="ECO:0000255" key="3"/>
<evidence type="ECO:0000305" key="4"/>
<gene>
    <name type="primary">CLDN4</name>
    <name type="synonym">CPER</name>
    <name type="synonym">CPETR1</name>
</gene>